<feature type="chain" id="PRO_1000055110" description="ATP synthase subunit beta">
    <location>
        <begin position="1"/>
        <end position="503"/>
    </location>
</feature>
<feature type="binding site" evidence="1">
    <location>
        <begin position="157"/>
        <end position="164"/>
    </location>
    <ligand>
        <name>ATP</name>
        <dbReference type="ChEBI" id="CHEBI:30616"/>
    </ligand>
</feature>
<proteinExistence type="inferred from homology"/>
<name>ATPB_FLAPJ</name>
<reference key="1">
    <citation type="journal article" date="2007" name="Nat. Biotechnol.">
        <title>Complete genome sequence of the fish pathogen Flavobacterium psychrophilum.</title>
        <authorList>
            <person name="Duchaud E."/>
            <person name="Boussaha M."/>
            <person name="Loux V."/>
            <person name="Bernardet J.-F."/>
            <person name="Michel C."/>
            <person name="Kerouault B."/>
            <person name="Mondot S."/>
            <person name="Nicolas P."/>
            <person name="Bossy R."/>
            <person name="Caron C."/>
            <person name="Bessieres P."/>
            <person name="Gibrat J.-F."/>
            <person name="Claverol S."/>
            <person name="Dumetz F."/>
            <person name="Le Henaff M."/>
            <person name="Benmansour A."/>
        </authorList>
    </citation>
    <scope>NUCLEOTIDE SEQUENCE [LARGE SCALE GENOMIC DNA]</scope>
    <source>
        <strain>ATCC 49511 / DSM 21280 / CIP 103535 / JIP02/86</strain>
    </source>
</reference>
<accession>A6GVV9</accession>
<gene>
    <name evidence="1" type="primary">atpD</name>
    <name type="ordered locus">FP0114</name>
</gene>
<organism>
    <name type="scientific">Flavobacterium psychrophilum (strain ATCC 49511 / DSM 21280 / CIP 103535 / JIP02/86)</name>
    <dbReference type="NCBI Taxonomy" id="402612"/>
    <lineage>
        <taxon>Bacteria</taxon>
        <taxon>Pseudomonadati</taxon>
        <taxon>Bacteroidota</taxon>
        <taxon>Flavobacteriia</taxon>
        <taxon>Flavobacteriales</taxon>
        <taxon>Flavobacteriaceae</taxon>
        <taxon>Flavobacterium</taxon>
    </lineage>
</organism>
<sequence>MSKVIGKVSQIIGPVVDVVFNGKDVELPKIYDSLEITKKDGTLLVLEVQSHIGENTVRTISMDSTDGLSRGYEVVGTGNPIKMPIGADVYGRLFNVIGDAIDGLGNLPKDGDNGMSIHRQAPRFEDLSTSSEVLFTGIKVIDLIEPYSKGGKIGLFGGAGVGKTVLIQELINNIAKGHGGLSVFAGVGERTREGNDLLREMLESGIIKYGDDFMHSMENGGWDLSKVDMPGMRESKATFVFGQMNEPPGARARVALSGLSIAEYFRDGAGSDQGKDVLFFVDNIFRFTQAGSEVSALLGRMPSAVGYQPTLATEMGAMQERITSTNKGSITSVQAVYVPADDLTDPAPATTFAHLDATTVLSRKIAELGIYPAVDPLDSTSRILTPQILGDEHYDCAQRVKEILQKYKQLQDIIAILGMEELSEEDKLSVSRARRVQRFLSQPFHVAEQFTGLKGVLVDIKDTIKGFNMIIDGELDHLPEAAFNLKGTIEEAIEAGEKMLAEA</sequence>
<keyword id="KW-0066">ATP synthesis</keyword>
<keyword id="KW-0067">ATP-binding</keyword>
<keyword id="KW-0997">Cell inner membrane</keyword>
<keyword id="KW-1003">Cell membrane</keyword>
<keyword id="KW-0139">CF(1)</keyword>
<keyword id="KW-0375">Hydrogen ion transport</keyword>
<keyword id="KW-0406">Ion transport</keyword>
<keyword id="KW-0472">Membrane</keyword>
<keyword id="KW-0547">Nucleotide-binding</keyword>
<keyword id="KW-1185">Reference proteome</keyword>
<keyword id="KW-1278">Translocase</keyword>
<keyword id="KW-0813">Transport</keyword>
<comment type="function">
    <text evidence="1">Produces ATP from ADP in the presence of a proton gradient across the membrane. The catalytic sites are hosted primarily by the beta subunits.</text>
</comment>
<comment type="catalytic activity">
    <reaction evidence="1">
        <text>ATP + H2O + 4 H(+)(in) = ADP + phosphate + 5 H(+)(out)</text>
        <dbReference type="Rhea" id="RHEA:57720"/>
        <dbReference type="ChEBI" id="CHEBI:15377"/>
        <dbReference type="ChEBI" id="CHEBI:15378"/>
        <dbReference type="ChEBI" id="CHEBI:30616"/>
        <dbReference type="ChEBI" id="CHEBI:43474"/>
        <dbReference type="ChEBI" id="CHEBI:456216"/>
        <dbReference type="EC" id="7.1.2.2"/>
    </reaction>
</comment>
<comment type="subunit">
    <text evidence="1">F-type ATPases have 2 components, CF(1) - the catalytic core - and CF(0) - the membrane proton channel. CF(1) has five subunits: alpha(3), beta(3), gamma(1), delta(1), epsilon(1). CF(0) has three main subunits: a(1), b(2) and c(9-12). The alpha and beta chains form an alternating ring which encloses part of the gamma chain. CF(1) is attached to CF(0) by a central stalk formed by the gamma and epsilon chains, while a peripheral stalk is formed by the delta and b chains.</text>
</comment>
<comment type="subcellular location">
    <subcellularLocation>
        <location evidence="1">Cell inner membrane</location>
        <topology evidence="1">Peripheral membrane protein</topology>
    </subcellularLocation>
</comment>
<comment type="similarity">
    <text evidence="1">Belongs to the ATPase alpha/beta chains family.</text>
</comment>
<protein>
    <recommendedName>
        <fullName evidence="1">ATP synthase subunit beta</fullName>
        <ecNumber evidence="1">7.1.2.2</ecNumber>
    </recommendedName>
    <alternativeName>
        <fullName evidence="1">ATP synthase F1 sector subunit beta</fullName>
    </alternativeName>
    <alternativeName>
        <fullName evidence="1">F-ATPase subunit beta</fullName>
    </alternativeName>
</protein>
<dbReference type="EC" id="7.1.2.2" evidence="1"/>
<dbReference type="EMBL" id="AM398681">
    <property type="protein sequence ID" value="CAL42232.1"/>
    <property type="molecule type" value="Genomic_DNA"/>
</dbReference>
<dbReference type="RefSeq" id="WP_011962293.1">
    <property type="nucleotide sequence ID" value="NC_009613.3"/>
</dbReference>
<dbReference type="RefSeq" id="YP_001295052.1">
    <property type="nucleotide sequence ID" value="NC_009613.3"/>
</dbReference>
<dbReference type="SMR" id="A6GVV9"/>
<dbReference type="STRING" id="402612.FP0114"/>
<dbReference type="EnsemblBacteria" id="CAL42232">
    <property type="protein sequence ID" value="CAL42232"/>
    <property type="gene ID" value="FP0114"/>
</dbReference>
<dbReference type="GeneID" id="66553742"/>
<dbReference type="KEGG" id="fps:FP0114"/>
<dbReference type="PATRIC" id="fig|402612.5.peg.117"/>
<dbReference type="eggNOG" id="COG0055">
    <property type="taxonomic scope" value="Bacteria"/>
</dbReference>
<dbReference type="HOGENOM" id="CLU_022398_0_2_10"/>
<dbReference type="OrthoDB" id="9801639at2"/>
<dbReference type="Proteomes" id="UP000006394">
    <property type="component" value="Chromosome"/>
</dbReference>
<dbReference type="GO" id="GO:0005886">
    <property type="term" value="C:plasma membrane"/>
    <property type="evidence" value="ECO:0007669"/>
    <property type="project" value="UniProtKB-SubCell"/>
</dbReference>
<dbReference type="GO" id="GO:0045259">
    <property type="term" value="C:proton-transporting ATP synthase complex"/>
    <property type="evidence" value="ECO:0007669"/>
    <property type="project" value="UniProtKB-KW"/>
</dbReference>
<dbReference type="GO" id="GO:0005524">
    <property type="term" value="F:ATP binding"/>
    <property type="evidence" value="ECO:0007669"/>
    <property type="project" value="UniProtKB-UniRule"/>
</dbReference>
<dbReference type="GO" id="GO:0016887">
    <property type="term" value="F:ATP hydrolysis activity"/>
    <property type="evidence" value="ECO:0007669"/>
    <property type="project" value="InterPro"/>
</dbReference>
<dbReference type="GO" id="GO:0046933">
    <property type="term" value="F:proton-transporting ATP synthase activity, rotational mechanism"/>
    <property type="evidence" value="ECO:0007669"/>
    <property type="project" value="UniProtKB-UniRule"/>
</dbReference>
<dbReference type="CDD" id="cd18110">
    <property type="entry name" value="ATP-synt_F1_beta_C"/>
    <property type="match status" value="1"/>
</dbReference>
<dbReference type="CDD" id="cd18115">
    <property type="entry name" value="ATP-synt_F1_beta_N"/>
    <property type="match status" value="1"/>
</dbReference>
<dbReference type="CDD" id="cd01133">
    <property type="entry name" value="F1-ATPase_beta_CD"/>
    <property type="match status" value="1"/>
</dbReference>
<dbReference type="FunFam" id="1.10.1140.10:FF:000001">
    <property type="entry name" value="ATP synthase subunit beta"/>
    <property type="match status" value="1"/>
</dbReference>
<dbReference type="FunFam" id="3.40.50.300:FF:000004">
    <property type="entry name" value="ATP synthase subunit beta"/>
    <property type="match status" value="1"/>
</dbReference>
<dbReference type="Gene3D" id="2.40.10.170">
    <property type="match status" value="1"/>
</dbReference>
<dbReference type="Gene3D" id="1.10.1140.10">
    <property type="entry name" value="Bovine Mitochondrial F1-atpase, Atp Synthase Beta Chain, Chain D, domain 3"/>
    <property type="match status" value="1"/>
</dbReference>
<dbReference type="Gene3D" id="3.40.50.300">
    <property type="entry name" value="P-loop containing nucleotide triphosphate hydrolases"/>
    <property type="match status" value="1"/>
</dbReference>
<dbReference type="HAMAP" id="MF_01347">
    <property type="entry name" value="ATP_synth_beta_bact"/>
    <property type="match status" value="1"/>
</dbReference>
<dbReference type="InterPro" id="IPR003593">
    <property type="entry name" value="AAA+_ATPase"/>
</dbReference>
<dbReference type="InterPro" id="IPR055190">
    <property type="entry name" value="ATP-synt_VA_C"/>
</dbReference>
<dbReference type="InterPro" id="IPR005722">
    <property type="entry name" value="ATP_synth_F1_bsu"/>
</dbReference>
<dbReference type="InterPro" id="IPR020003">
    <property type="entry name" value="ATPase_a/bsu_AS"/>
</dbReference>
<dbReference type="InterPro" id="IPR050053">
    <property type="entry name" value="ATPase_alpha/beta_chains"/>
</dbReference>
<dbReference type="InterPro" id="IPR004100">
    <property type="entry name" value="ATPase_F1/V1/A1_a/bsu_N"/>
</dbReference>
<dbReference type="InterPro" id="IPR036121">
    <property type="entry name" value="ATPase_F1/V1/A1_a/bsu_N_sf"/>
</dbReference>
<dbReference type="InterPro" id="IPR000194">
    <property type="entry name" value="ATPase_F1/V1/A1_a/bsu_nucl-bd"/>
</dbReference>
<dbReference type="InterPro" id="IPR024034">
    <property type="entry name" value="ATPase_F1/V1_b/a_C"/>
</dbReference>
<dbReference type="InterPro" id="IPR027417">
    <property type="entry name" value="P-loop_NTPase"/>
</dbReference>
<dbReference type="NCBIfam" id="TIGR01039">
    <property type="entry name" value="atpD"/>
    <property type="match status" value="1"/>
</dbReference>
<dbReference type="PANTHER" id="PTHR15184">
    <property type="entry name" value="ATP SYNTHASE"/>
    <property type="match status" value="1"/>
</dbReference>
<dbReference type="PANTHER" id="PTHR15184:SF71">
    <property type="entry name" value="ATP SYNTHASE SUBUNIT BETA, MITOCHONDRIAL"/>
    <property type="match status" value="1"/>
</dbReference>
<dbReference type="Pfam" id="PF00006">
    <property type="entry name" value="ATP-synt_ab"/>
    <property type="match status" value="1"/>
</dbReference>
<dbReference type="Pfam" id="PF02874">
    <property type="entry name" value="ATP-synt_ab_N"/>
    <property type="match status" value="1"/>
</dbReference>
<dbReference type="Pfam" id="PF22919">
    <property type="entry name" value="ATP-synt_VA_C"/>
    <property type="match status" value="1"/>
</dbReference>
<dbReference type="SMART" id="SM00382">
    <property type="entry name" value="AAA"/>
    <property type="match status" value="1"/>
</dbReference>
<dbReference type="SUPFAM" id="SSF47917">
    <property type="entry name" value="C-terminal domain of alpha and beta subunits of F1 ATP synthase"/>
    <property type="match status" value="1"/>
</dbReference>
<dbReference type="SUPFAM" id="SSF50615">
    <property type="entry name" value="N-terminal domain of alpha and beta subunits of F1 ATP synthase"/>
    <property type="match status" value="1"/>
</dbReference>
<dbReference type="SUPFAM" id="SSF52540">
    <property type="entry name" value="P-loop containing nucleoside triphosphate hydrolases"/>
    <property type="match status" value="1"/>
</dbReference>
<dbReference type="PROSITE" id="PS00152">
    <property type="entry name" value="ATPASE_ALPHA_BETA"/>
    <property type="match status" value="1"/>
</dbReference>
<evidence type="ECO:0000255" key="1">
    <source>
        <dbReference type="HAMAP-Rule" id="MF_01347"/>
    </source>
</evidence>